<proteinExistence type="inferred from homology"/>
<sequence>MAKKSSSRLPKRKGEYTYRGKTVSELQELSLEEFAELLPSRERRSIKRGFTDGQKKVLHEFKEGKKVRTHHRDLIILPEMIGQTIEIHNGKGFVSVDLQPEMIGHRFGEFAPTRSRVSHGSAGVGATRSSKFVPLK</sequence>
<reference key="1">
    <citation type="journal article" date="2006" name="J. Bacteriol.">
        <title>The Methanosarcina barkeri genome: comparative analysis with Methanosarcina acetivorans and Methanosarcina mazei reveals extensive rearrangement within methanosarcinal genomes.</title>
        <authorList>
            <person name="Maeder D.L."/>
            <person name="Anderson I."/>
            <person name="Brettin T.S."/>
            <person name="Bruce D.C."/>
            <person name="Gilna P."/>
            <person name="Han C.S."/>
            <person name="Lapidus A."/>
            <person name="Metcalf W.W."/>
            <person name="Saunders E."/>
            <person name="Tapia R."/>
            <person name="Sowers K.R."/>
        </authorList>
    </citation>
    <scope>NUCLEOTIDE SEQUENCE [LARGE SCALE GENOMIC DNA]</scope>
    <source>
        <strain>Fusaro / DSM 804</strain>
    </source>
</reference>
<comment type="function">
    <text evidence="1">Protein S19 forms a complex with S13 that binds strongly to the 16S ribosomal RNA.</text>
</comment>
<comment type="similarity">
    <text evidence="1">Belongs to the universal ribosomal protein uS19 family.</text>
</comment>
<protein>
    <recommendedName>
        <fullName evidence="1">Small ribosomal subunit protein uS19</fullName>
    </recommendedName>
    <alternativeName>
        <fullName evidence="3">30S ribosomal protein S19</fullName>
    </alternativeName>
</protein>
<accession>Q46G99</accession>
<feature type="chain" id="PRO_0000265471" description="Small ribosomal subunit protein uS19">
    <location>
        <begin position="1"/>
        <end position="136"/>
    </location>
</feature>
<feature type="region of interest" description="Disordered" evidence="2">
    <location>
        <begin position="114"/>
        <end position="136"/>
    </location>
</feature>
<gene>
    <name evidence="1" type="primary">rps19</name>
    <name type="ordered locus">Mbar_A0106</name>
</gene>
<evidence type="ECO:0000255" key="1">
    <source>
        <dbReference type="HAMAP-Rule" id="MF_00531"/>
    </source>
</evidence>
<evidence type="ECO:0000256" key="2">
    <source>
        <dbReference type="SAM" id="MobiDB-lite"/>
    </source>
</evidence>
<evidence type="ECO:0000305" key="3"/>
<name>RS19_METBF</name>
<organism>
    <name type="scientific">Methanosarcina barkeri (strain Fusaro / DSM 804)</name>
    <dbReference type="NCBI Taxonomy" id="269797"/>
    <lineage>
        <taxon>Archaea</taxon>
        <taxon>Methanobacteriati</taxon>
        <taxon>Methanobacteriota</taxon>
        <taxon>Stenosarchaea group</taxon>
        <taxon>Methanomicrobia</taxon>
        <taxon>Methanosarcinales</taxon>
        <taxon>Methanosarcinaceae</taxon>
        <taxon>Methanosarcina</taxon>
    </lineage>
</organism>
<keyword id="KW-0687">Ribonucleoprotein</keyword>
<keyword id="KW-0689">Ribosomal protein</keyword>
<keyword id="KW-0694">RNA-binding</keyword>
<keyword id="KW-0699">rRNA-binding</keyword>
<dbReference type="EMBL" id="CP000099">
    <property type="protein sequence ID" value="AAZ69093.1"/>
    <property type="molecule type" value="Genomic_DNA"/>
</dbReference>
<dbReference type="SMR" id="Q46G99"/>
<dbReference type="STRING" id="269797.Mbar_A0106"/>
<dbReference type="PaxDb" id="269797-Mbar_A0106"/>
<dbReference type="KEGG" id="mba:Mbar_A0106"/>
<dbReference type="eggNOG" id="arCOG04099">
    <property type="taxonomic scope" value="Archaea"/>
</dbReference>
<dbReference type="HOGENOM" id="CLU_097347_1_1_2"/>
<dbReference type="OrthoDB" id="30559at2157"/>
<dbReference type="GO" id="GO:0022627">
    <property type="term" value="C:cytosolic small ribosomal subunit"/>
    <property type="evidence" value="ECO:0007669"/>
    <property type="project" value="TreeGrafter"/>
</dbReference>
<dbReference type="GO" id="GO:0019843">
    <property type="term" value="F:rRNA binding"/>
    <property type="evidence" value="ECO:0007669"/>
    <property type="project" value="UniProtKB-UniRule"/>
</dbReference>
<dbReference type="GO" id="GO:0003735">
    <property type="term" value="F:structural constituent of ribosome"/>
    <property type="evidence" value="ECO:0007669"/>
    <property type="project" value="InterPro"/>
</dbReference>
<dbReference type="GO" id="GO:0000028">
    <property type="term" value="P:ribosomal small subunit assembly"/>
    <property type="evidence" value="ECO:0007669"/>
    <property type="project" value="TreeGrafter"/>
</dbReference>
<dbReference type="GO" id="GO:0006412">
    <property type="term" value="P:translation"/>
    <property type="evidence" value="ECO:0007669"/>
    <property type="project" value="UniProtKB-UniRule"/>
</dbReference>
<dbReference type="Gene3D" id="3.30.860.10">
    <property type="entry name" value="30s Ribosomal Protein S19, Chain A"/>
    <property type="match status" value="1"/>
</dbReference>
<dbReference type="HAMAP" id="MF_00531">
    <property type="entry name" value="Ribosomal_uS19"/>
    <property type="match status" value="1"/>
</dbReference>
<dbReference type="InterPro" id="IPR002222">
    <property type="entry name" value="Ribosomal_uS19"/>
</dbReference>
<dbReference type="InterPro" id="IPR020934">
    <property type="entry name" value="Ribosomal_uS19_CS"/>
</dbReference>
<dbReference type="InterPro" id="IPR005713">
    <property type="entry name" value="Ribosomal_uS19_euk/arc"/>
</dbReference>
<dbReference type="InterPro" id="IPR023575">
    <property type="entry name" value="Ribosomal_uS19_SF"/>
</dbReference>
<dbReference type="NCBIfam" id="NF003121">
    <property type="entry name" value="PRK04038.1"/>
    <property type="match status" value="1"/>
</dbReference>
<dbReference type="NCBIfam" id="TIGR01025">
    <property type="entry name" value="uS19_arch"/>
    <property type="match status" value="1"/>
</dbReference>
<dbReference type="PANTHER" id="PTHR11880">
    <property type="entry name" value="RIBOSOMAL PROTEIN S19P FAMILY MEMBER"/>
    <property type="match status" value="1"/>
</dbReference>
<dbReference type="PANTHER" id="PTHR11880:SF2">
    <property type="entry name" value="SMALL RIBOSOMAL SUBUNIT PROTEIN US19"/>
    <property type="match status" value="1"/>
</dbReference>
<dbReference type="Pfam" id="PF00203">
    <property type="entry name" value="Ribosomal_S19"/>
    <property type="match status" value="1"/>
</dbReference>
<dbReference type="PIRSF" id="PIRSF002144">
    <property type="entry name" value="Ribosomal_S19"/>
    <property type="match status" value="1"/>
</dbReference>
<dbReference type="PRINTS" id="PR00975">
    <property type="entry name" value="RIBOSOMALS19"/>
</dbReference>
<dbReference type="SUPFAM" id="SSF54570">
    <property type="entry name" value="Ribosomal protein S19"/>
    <property type="match status" value="1"/>
</dbReference>
<dbReference type="PROSITE" id="PS00323">
    <property type="entry name" value="RIBOSOMAL_S19"/>
    <property type="match status" value="1"/>
</dbReference>